<sequence>MSQLSTIIEQAFEDRANFTAADCPSEIRQAVEEAIAGLDNGTLRVAEKINGEWVVHQWLKKAVLLSFKLNDNKPIESCDLRFYDKVETKFSGWTEEQFKAAGVRVVPPAVARRGSFQAKNVVLMPSYVNIGAYVDEGTMVDTWATVGSCAQIGKNVHLSGGVGIGGVLEPLQANPTIIEDNCFIGARSEIVEGVIVEEGSVISMGVYIGQSTRIYDRETGEIHYGRVPAGSVVVPGNLPSADGKYSLYAAIIVKKVDAQTRAKTSLNDLLRAD</sequence>
<reference key="1">
    <citation type="journal article" date="2008" name="J. Bacteriol.">
        <title>Comparative genome sequence analysis of multidrug-resistant Acinetobacter baumannii.</title>
        <authorList>
            <person name="Adams M.D."/>
            <person name="Goglin K."/>
            <person name="Molyneaux N."/>
            <person name="Hujer K.M."/>
            <person name="Lavender H."/>
            <person name="Jamison J.J."/>
            <person name="MacDonald I.J."/>
            <person name="Martin K.M."/>
            <person name="Russo T."/>
            <person name="Campagnari A.A."/>
            <person name="Hujer A.M."/>
            <person name="Bonomo R.A."/>
            <person name="Gill S.R."/>
        </authorList>
    </citation>
    <scope>NUCLEOTIDE SEQUENCE [LARGE SCALE GENOMIC DNA]</scope>
    <source>
        <strain>AB0057</strain>
    </source>
</reference>
<dbReference type="EC" id="2.3.1.117" evidence="1"/>
<dbReference type="EMBL" id="CP001182">
    <property type="protein sequence ID" value="ACJ42322.1"/>
    <property type="molecule type" value="Genomic_DNA"/>
</dbReference>
<dbReference type="RefSeq" id="WP_000080867.1">
    <property type="nucleotide sequence ID" value="NC_011586.2"/>
</dbReference>
<dbReference type="SMR" id="B7I595"/>
<dbReference type="GeneID" id="92894847"/>
<dbReference type="KEGG" id="abn:AB57_2980"/>
<dbReference type="HOGENOM" id="CLU_050859_0_1_6"/>
<dbReference type="UniPathway" id="UPA00034">
    <property type="reaction ID" value="UER00019"/>
</dbReference>
<dbReference type="Proteomes" id="UP000007094">
    <property type="component" value="Chromosome"/>
</dbReference>
<dbReference type="GO" id="GO:0005737">
    <property type="term" value="C:cytoplasm"/>
    <property type="evidence" value="ECO:0007669"/>
    <property type="project" value="UniProtKB-SubCell"/>
</dbReference>
<dbReference type="GO" id="GO:0008666">
    <property type="term" value="F:2,3,4,5-tetrahydropyridine-2,6-dicarboxylate N-succinyltransferase activity"/>
    <property type="evidence" value="ECO:0007669"/>
    <property type="project" value="UniProtKB-UniRule"/>
</dbReference>
<dbReference type="GO" id="GO:0016779">
    <property type="term" value="F:nucleotidyltransferase activity"/>
    <property type="evidence" value="ECO:0007669"/>
    <property type="project" value="TreeGrafter"/>
</dbReference>
<dbReference type="GO" id="GO:0019877">
    <property type="term" value="P:diaminopimelate biosynthetic process"/>
    <property type="evidence" value="ECO:0007669"/>
    <property type="project" value="UniProtKB-UniRule"/>
</dbReference>
<dbReference type="GO" id="GO:0009089">
    <property type="term" value="P:lysine biosynthetic process via diaminopimelate"/>
    <property type="evidence" value="ECO:0007669"/>
    <property type="project" value="UniProtKB-UniRule"/>
</dbReference>
<dbReference type="CDD" id="cd03350">
    <property type="entry name" value="LbH_THP_succinylT"/>
    <property type="match status" value="1"/>
</dbReference>
<dbReference type="Gene3D" id="2.160.10.10">
    <property type="entry name" value="Hexapeptide repeat proteins"/>
    <property type="match status" value="1"/>
</dbReference>
<dbReference type="Gene3D" id="1.10.166.10">
    <property type="entry name" value="Tetrahydrodipicolinate-N-succinyltransferase, N-terminal domain"/>
    <property type="match status" value="1"/>
</dbReference>
<dbReference type="HAMAP" id="MF_00811">
    <property type="entry name" value="DapD"/>
    <property type="match status" value="1"/>
</dbReference>
<dbReference type="InterPro" id="IPR005664">
    <property type="entry name" value="DapD_Trfase_Hexpep_rpt_fam"/>
</dbReference>
<dbReference type="InterPro" id="IPR001451">
    <property type="entry name" value="Hexapep"/>
</dbReference>
<dbReference type="InterPro" id="IPR018357">
    <property type="entry name" value="Hexapep_transf_CS"/>
</dbReference>
<dbReference type="InterPro" id="IPR023180">
    <property type="entry name" value="THP_succinylTrfase_dom1"/>
</dbReference>
<dbReference type="InterPro" id="IPR037133">
    <property type="entry name" value="THP_succinylTrfase_N_sf"/>
</dbReference>
<dbReference type="InterPro" id="IPR011004">
    <property type="entry name" value="Trimer_LpxA-like_sf"/>
</dbReference>
<dbReference type="NCBIfam" id="TIGR00965">
    <property type="entry name" value="dapD"/>
    <property type="match status" value="1"/>
</dbReference>
<dbReference type="NCBIfam" id="NF008808">
    <property type="entry name" value="PRK11830.1"/>
    <property type="match status" value="1"/>
</dbReference>
<dbReference type="PANTHER" id="PTHR19136:SF52">
    <property type="entry name" value="2,3,4,5-TETRAHYDROPYRIDINE-2,6-DICARBOXYLATE N-SUCCINYLTRANSFERASE"/>
    <property type="match status" value="1"/>
</dbReference>
<dbReference type="PANTHER" id="PTHR19136">
    <property type="entry name" value="MOLYBDENUM COFACTOR GUANYLYLTRANSFERASE"/>
    <property type="match status" value="1"/>
</dbReference>
<dbReference type="Pfam" id="PF14602">
    <property type="entry name" value="Hexapep_2"/>
    <property type="match status" value="1"/>
</dbReference>
<dbReference type="Pfam" id="PF14805">
    <property type="entry name" value="THDPS_N_2"/>
    <property type="match status" value="1"/>
</dbReference>
<dbReference type="SUPFAM" id="SSF51161">
    <property type="entry name" value="Trimeric LpxA-like enzymes"/>
    <property type="match status" value="1"/>
</dbReference>
<dbReference type="PROSITE" id="PS00101">
    <property type="entry name" value="HEXAPEP_TRANSFERASES"/>
    <property type="match status" value="1"/>
</dbReference>
<accession>B7I595</accession>
<proteinExistence type="inferred from homology"/>
<comment type="catalytic activity">
    <reaction evidence="1">
        <text>(S)-2,3,4,5-tetrahydrodipicolinate + succinyl-CoA + H2O = (S)-2-succinylamino-6-oxoheptanedioate + CoA</text>
        <dbReference type="Rhea" id="RHEA:17325"/>
        <dbReference type="ChEBI" id="CHEBI:15377"/>
        <dbReference type="ChEBI" id="CHEBI:15685"/>
        <dbReference type="ChEBI" id="CHEBI:16845"/>
        <dbReference type="ChEBI" id="CHEBI:57287"/>
        <dbReference type="ChEBI" id="CHEBI:57292"/>
        <dbReference type="EC" id="2.3.1.117"/>
    </reaction>
</comment>
<comment type="pathway">
    <text evidence="1">Amino-acid biosynthesis; L-lysine biosynthesis via DAP pathway; LL-2,6-diaminopimelate from (S)-tetrahydrodipicolinate (succinylase route): step 1/3.</text>
</comment>
<comment type="subcellular location">
    <subcellularLocation>
        <location evidence="1">Cytoplasm</location>
    </subcellularLocation>
</comment>
<comment type="similarity">
    <text evidence="1">Belongs to the transferase hexapeptide repeat family.</text>
</comment>
<keyword id="KW-0012">Acyltransferase</keyword>
<keyword id="KW-0028">Amino-acid biosynthesis</keyword>
<keyword id="KW-0963">Cytoplasm</keyword>
<keyword id="KW-0220">Diaminopimelate biosynthesis</keyword>
<keyword id="KW-0457">Lysine biosynthesis</keyword>
<keyword id="KW-0677">Repeat</keyword>
<keyword id="KW-0808">Transferase</keyword>
<organism>
    <name type="scientific">Acinetobacter baumannii (strain AB0057)</name>
    <dbReference type="NCBI Taxonomy" id="480119"/>
    <lineage>
        <taxon>Bacteria</taxon>
        <taxon>Pseudomonadati</taxon>
        <taxon>Pseudomonadota</taxon>
        <taxon>Gammaproteobacteria</taxon>
        <taxon>Moraxellales</taxon>
        <taxon>Moraxellaceae</taxon>
        <taxon>Acinetobacter</taxon>
        <taxon>Acinetobacter calcoaceticus/baumannii complex</taxon>
    </lineage>
</organism>
<feature type="chain" id="PRO_1000134023" description="2,3,4,5-tetrahydropyridine-2,6-dicarboxylate N-succinyltransferase">
    <location>
        <begin position="1"/>
        <end position="273"/>
    </location>
</feature>
<protein>
    <recommendedName>
        <fullName evidence="1">2,3,4,5-tetrahydropyridine-2,6-dicarboxylate N-succinyltransferase</fullName>
        <ecNumber evidence="1">2.3.1.117</ecNumber>
    </recommendedName>
    <alternativeName>
        <fullName evidence="1">Tetrahydrodipicolinate N-succinyltransferase</fullName>
        <shortName evidence="1">THP succinyltransferase</shortName>
        <shortName evidence="1">Tetrahydropicolinate succinylase</shortName>
    </alternativeName>
</protein>
<evidence type="ECO:0000255" key="1">
    <source>
        <dbReference type="HAMAP-Rule" id="MF_00811"/>
    </source>
</evidence>
<name>DAPD_ACIB5</name>
<gene>
    <name evidence="1" type="primary">dapD</name>
    <name type="ordered locus">AB57_2980</name>
</gene>